<name>ISPDF_RHOPT</name>
<protein>
    <recommendedName>
        <fullName evidence="1">Bifunctional enzyme IspD/IspF</fullName>
    </recommendedName>
    <domain>
        <recommendedName>
            <fullName evidence="1">2-C-methyl-D-erythritol 4-phosphate cytidylyltransferase</fullName>
            <ecNumber evidence="1">2.7.7.60</ecNumber>
        </recommendedName>
        <alternativeName>
            <fullName evidence="1">4-diphosphocytidyl-2C-methyl-D-erythritol synthase</fullName>
        </alternativeName>
        <alternativeName>
            <fullName evidence="1">MEP cytidylyltransferase</fullName>
            <shortName evidence="1">MCT</shortName>
        </alternativeName>
    </domain>
    <domain>
        <recommendedName>
            <fullName evidence="1">2-C-methyl-D-erythritol 2,4-cyclodiphosphate synthase</fullName>
            <shortName evidence="1">MECDP-synthase</shortName>
            <shortName evidence="1">MECPP-synthase</shortName>
            <shortName evidence="1">MECPS</shortName>
            <ecNumber evidence="1">4.6.1.12</ecNumber>
        </recommendedName>
    </domain>
</protein>
<reference key="1">
    <citation type="submission" date="2008-05" db="EMBL/GenBank/DDBJ databases">
        <title>Complete sequence of Rhodopseudomonas palustris TIE-1.</title>
        <authorList>
            <consortium name="US DOE Joint Genome Institute"/>
            <person name="Lucas S."/>
            <person name="Copeland A."/>
            <person name="Lapidus A."/>
            <person name="Glavina del Rio T."/>
            <person name="Dalin E."/>
            <person name="Tice H."/>
            <person name="Pitluck S."/>
            <person name="Chain P."/>
            <person name="Malfatti S."/>
            <person name="Shin M."/>
            <person name="Vergez L."/>
            <person name="Lang D."/>
            <person name="Schmutz J."/>
            <person name="Larimer F."/>
            <person name="Land M."/>
            <person name="Hauser L."/>
            <person name="Kyrpides N."/>
            <person name="Mikhailova N."/>
            <person name="Emerson D."/>
            <person name="Newman D.K."/>
            <person name="Roden E."/>
            <person name="Richardson P."/>
        </authorList>
    </citation>
    <scope>NUCLEOTIDE SEQUENCE [LARGE SCALE GENOMIC DNA]</scope>
    <source>
        <strain>TIE-1</strain>
    </source>
</reference>
<accession>B3QIL5</accession>
<organism>
    <name type="scientific">Rhodopseudomonas palustris (strain TIE-1)</name>
    <dbReference type="NCBI Taxonomy" id="395960"/>
    <lineage>
        <taxon>Bacteria</taxon>
        <taxon>Pseudomonadati</taxon>
        <taxon>Pseudomonadota</taxon>
        <taxon>Alphaproteobacteria</taxon>
        <taxon>Hyphomicrobiales</taxon>
        <taxon>Nitrobacteraceae</taxon>
        <taxon>Rhodopseudomonas</taxon>
    </lineage>
</organism>
<keyword id="KW-0414">Isoprene biosynthesis</keyword>
<keyword id="KW-0456">Lyase</keyword>
<keyword id="KW-0479">Metal-binding</keyword>
<keyword id="KW-0511">Multifunctional enzyme</keyword>
<keyword id="KW-0548">Nucleotidyltransferase</keyword>
<keyword id="KW-0808">Transferase</keyword>
<comment type="function">
    <text evidence="1">Bifunctional enzyme that catalyzes the formation of 4-diphosphocytidyl-2-C-methyl-D-erythritol from CTP and 2-C-methyl-D-erythritol 4-phosphate (MEP) (IspD), and catalyzes the conversion of 4-diphosphocytidyl-2-C-methyl-D-erythritol 2-phosphate (CDP-ME2P) to 2-C-methyl-D-erythritol 2,4-cyclodiphosphate (ME-CPP) with a corresponding release of cytidine 5-monophosphate (CMP) (IspF).</text>
</comment>
<comment type="catalytic activity">
    <reaction evidence="1">
        <text>2-C-methyl-D-erythritol 4-phosphate + CTP + H(+) = 4-CDP-2-C-methyl-D-erythritol + diphosphate</text>
        <dbReference type="Rhea" id="RHEA:13429"/>
        <dbReference type="ChEBI" id="CHEBI:15378"/>
        <dbReference type="ChEBI" id="CHEBI:33019"/>
        <dbReference type="ChEBI" id="CHEBI:37563"/>
        <dbReference type="ChEBI" id="CHEBI:57823"/>
        <dbReference type="ChEBI" id="CHEBI:58262"/>
        <dbReference type="EC" id="2.7.7.60"/>
    </reaction>
</comment>
<comment type="catalytic activity">
    <reaction evidence="1">
        <text>4-CDP-2-C-methyl-D-erythritol 2-phosphate = 2-C-methyl-D-erythritol 2,4-cyclic diphosphate + CMP</text>
        <dbReference type="Rhea" id="RHEA:23864"/>
        <dbReference type="ChEBI" id="CHEBI:57919"/>
        <dbReference type="ChEBI" id="CHEBI:58483"/>
        <dbReference type="ChEBI" id="CHEBI:60377"/>
        <dbReference type="EC" id="4.6.1.12"/>
    </reaction>
</comment>
<comment type="cofactor">
    <cofactor evidence="1">
        <name>a divalent metal cation</name>
        <dbReference type="ChEBI" id="CHEBI:60240"/>
    </cofactor>
</comment>
<comment type="pathway">
    <text evidence="1">Isoprenoid biosynthesis; isopentenyl diphosphate biosynthesis via DXP pathway; isopentenyl diphosphate from 1-deoxy-D-xylulose 5-phosphate: step 2/6.</text>
</comment>
<comment type="pathway">
    <text evidence="1">Isoprenoid biosynthesis; isopentenyl diphosphate biosynthesis via DXP pathway; isopentenyl diphosphate from 1-deoxy-D-xylulose 5-phosphate: step 4/6.</text>
</comment>
<comment type="similarity">
    <text evidence="1">In the N-terminal section; belongs to the IspD/TarI cytidylyltransferase family. IspD subfamily.</text>
</comment>
<comment type="similarity">
    <text evidence="1">In the C-terminal section; belongs to the IspF family.</text>
</comment>
<sequence>MTNSPRTAAIIVAAGRGLRAGAGGPKQYRTLAGRPVIARAMEPFCTHPGVMAVQPVTNPDDTEMFNAAVAGLNFRPAVGGGATRQASVRAGLEALAELKPDIVLIHDAARCFVTPELISRAITAAGATGAALPVVAVTDTIKQVDSSGAVDATPDRASLRIAQTPQAFRFDVILDAHRRAASGGRDDFTDDAAIAEWAGLTVSTFEGDANNMKMTTPEDFAREESRLMAALGDIRTGTGYDVHAFGEGDHVWLCGLKVPHTRGFLAHSDGDVGLHALVDAILGALADGDIGSHFPPTDPQWKGAASDKFLKYAIDRVTARGGRVANLEVTMICERPKIGPLRDAMRQRIAEITGVPVSRVAVKATTSEKLGFTGREEGIAATASATIRLPWGADGLAG</sequence>
<gene>
    <name evidence="1" type="primary">ispDF</name>
    <name type="ordered locus">Rpal_2860</name>
</gene>
<dbReference type="EC" id="2.7.7.60" evidence="1"/>
<dbReference type="EC" id="4.6.1.12" evidence="1"/>
<dbReference type="EMBL" id="CP001096">
    <property type="protein sequence ID" value="ACF01368.1"/>
    <property type="molecule type" value="Genomic_DNA"/>
</dbReference>
<dbReference type="RefSeq" id="WP_012496039.1">
    <property type="nucleotide sequence ID" value="NC_011004.1"/>
</dbReference>
<dbReference type="SMR" id="B3QIL5"/>
<dbReference type="KEGG" id="rpt:Rpal_2860"/>
<dbReference type="HOGENOM" id="CLU_042800_2_3_5"/>
<dbReference type="OrthoDB" id="9804336at2"/>
<dbReference type="UniPathway" id="UPA00056">
    <property type="reaction ID" value="UER00093"/>
</dbReference>
<dbReference type="UniPathway" id="UPA00056">
    <property type="reaction ID" value="UER00095"/>
</dbReference>
<dbReference type="Proteomes" id="UP000001725">
    <property type="component" value="Chromosome"/>
</dbReference>
<dbReference type="GO" id="GO:0008685">
    <property type="term" value="F:2-C-methyl-D-erythritol 2,4-cyclodiphosphate synthase activity"/>
    <property type="evidence" value="ECO:0007669"/>
    <property type="project" value="UniProtKB-UniRule"/>
</dbReference>
<dbReference type="GO" id="GO:0050518">
    <property type="term" value="F:2-C-methyl-D-erythritol 4-phosphate cytidylyltransferase activity"/>
    <property type="evidence" value="ECO:0007669"/>
    <property type="project" value="UniProtKB-UniRule"/>
</dbReference>
<dbReference type="GO" id="GO:0046872">
    <property type="term" value="F:metal ion binding"/>
    <property type="evidence" value="ECO:0007669"/>
    <property type="project" value="UniProtKB-KW"/>
</dbReference>
<dbReference type="GO" id="GO:0019288">
    <property type="term" value="P:isopentenyl diphosphate biosynthetic process, methylerythritol 4-phosphate pathway"/>
    <property type="evidence" value="ECO:0007669"/>
    <property type="project" value="UniProtKB-UniRule"/>
</dbReference>
<dbReference type="GO" id="GO:0016114">
    <property type="term" value="P:terpenoid biosynthetic process"/>
    <property type="evidence" value="ECO:0007669"/>
    <property type="project" value="InterPro"/>
</dbReference>
<dbReference type="CDD" id="cd02516">
    <property type="entry name" value="CDP-ME_synthetase"/>
    <property type="match status" value="1"/>
</dbReference>
<dbReference type="CDD" id="cd00554">
    <property type="entry name" value="MECDP_synthase"/>
    <property type="match status" value="1"/>
</dbReference>
<dbReference type="FunFam" id="3.90.550.10:FF:000003">
    <property type="entry name" value="2-C-methyl-D-erythritol 4-phosphate cytidylyltransferase"/>
    <property type="match status" value="1"/>
</dbReference>
<dbReference type="Gene3D" id="3.30.1330.50">
    <property type="entry name" value="2-C-methyl-D-erythritol 2,4-cyclodiphosphate synthase"/>
    <property type="match status" value="1"/>
</dbReference>
<dbReference type="Gene3D" id="3.90.550.10">
    <property type="entry name" value="Spore Coat Polysaccharide Biosynthesis Protein SpsA, Chain A"/>
    <property type="match status" value="1"/>
</dbReference>
<dbReference type="HAMAP" id="MF_00108">
    <property type="entry name" value="IspD"/>
    <property type="match status" value="1"/>
</dbReference>
<dbReference type="HAMAP" id="MF_01520">
    <property type="entry name" value="IspDF"/>
    <property type="match status" value="1"/>
</dbReference>
<dbReference type="HAMAP" id="MF_00107">
    <property type="entry name" value="IspF"/>
    <property type="match status" value="1"/>
</dbReference>
<dbReference type="InterPro" id="IPR001228">
    <property type="entry name" value="IspD"/>
</dbReference>
<dbReference type="InterPro" id="IPR026596">
    <property type="entry name" value="IspD/F"/>
</dbReference>
<dbReference type="InterPro" id="IPR034683">
    <property type="entry name" value="IspD/TarI"/>
</dbReference>
<dbReference type="InterPro" id="IPR018294">
    <property type="entry name" value="ISPD_synthase_CS"/>
</dbReference>
<dbReference type="InterPro" id="IPR003526">
    <property type="entry name" value="MECDP_synthase"/>
</dbReference>
<dbReference type="InterPro" id="IPR020555">
    <property type="entry name" value="MECDP_synthase_CS"/>
</dbReference>
<dbReference type="InterPro" id="IPR036571">
    <property type="entry name" value="MECDP_synthase_sf"/>
</dbReference>
<dbReference type="InterPro" id="IPR029044">
    <property type="entry name" value="Nucleotide-diphossugar_trans"/>
</dbReference>
<dbReference type="NCBIfam" id="TIGR00453">
    <property type="entry name" value="ispD"/>
    <property type="match status" value="1"/>
</dbReference>
<dbReference type="NCBIfam" id="TIGR00151">
    <property type="entry name" value="ispF"/>
    <property type="match status" value="1"/>
</dbReference>
<dbReference type="NCBIfam" id="NF006899">
    <property type="entry name" value="PRK09382.1"/>
    <property type="match status" value="1"/>
</dbReference>
<dbReference type="PANTHER" id="PTHR43181">
    <property type="entry name" value="2-C-METHYL-D-ERYTHRITOL 2,4-CYCLODIPHOSPHATE SYNTHASE, CHLOROPLASTIC"/>
    <property type="match status" value="1"/>
</dbReference>
<dbReference type="PANTHER" id="PTHR43181:SF1">
    <property type="entry name" value="2-C-METHYL-D-ERYTHRITOL 2,4-CYCLODIPHOSPHATE SYNTHASE, CHLOROPLASTIC"/>
    <property type="match status" value="1"/>
</dbReference>
<dbReference type="Pfam" id="PF01128">
    <property type="entry name" value="IspD"/>
    <property type="match status" value="1"/>
</dbReference>
<dbReference type="Pfam" id="PF02542">
    <property type="entry name" value="YgbB"/>
    <property type="match status" value="1"/>
</dbReference>
<dbReference type="SUPFAM" id="SSF69765">
    <property type="entry name" value="IpsF-like"/>
    <property type="match status" value="1"/>
</dbReference>
<dbReference type="SUPFAM" id="SSF53448">
    <property type="entry name" value="Nucleotide-diphospho-sugar transferases"/>
    <property type="match status" value="1"/>
</dbReference>
<dbReference type="PROSITE" id="PS01295">
    <property type="entry name" value="ISPD"/>
    <property type="match status" value="1"/>
</dbReference>
<dbReference type="PROSITE" id="PS01350">
    <property type="entry name" value="ISPF"/>
    <property type="match status" value="1"/>
</dbReference>
<feature type="chain" id="PRO_1000191079" description="Bifunctional enzyme IspD/IspF">
    <location>
        <begin position="1"/>
        <end position="398"/>
    </location>
</feature>
<feature type="region of interest" description="2-C-methyl-D-erythritol 4-phosphate cytidylyltransferase" evidence="1">
    <location>
        <begin position="1"/>
        <end position="234"/>
    </location>
</feature>
<feature type="region of interest" description="2-C-methyl-D-erythritol 2,4-cyclodiphosphate synthase" evidence="1">
    <location>
        <begin position="235"/>
        <end position="398"/>
    </location>
</feature>
<feature type="binding site" evidence="1">
    <location>
        <begin position="241"/>
        <end position="243"/>
    </location>
    <ligand>
        <name>4-CDP-2-C-methyl-D-erythritol 2-phosphate</name>
        <dbReference type="ChEBI" id="CHEBI:57919"/>
    </ligand>
</feature>
<feature type="binding site" evidence="1">
    <location>
        <position position="241"/>
    </location>
    <ligand>
        <name>a divalent metal cation</name>
        <dbReference type="ChEBI" id="CHEBI:60240"/>
    </ligand>
</feature>
<feature type="binding site" evidence="1">
    <location>
        <position position="243"/>
    </location>
    <ligand>
        <name>a divalent metal cation</name>
        <dbReference type="ChEBI" id="CHEBI:60240"/>
    </ligand>
</feature>
<feature type="binding site" evidence="1">
    <location>
        <begin position="267"/>
        <end position="268"/>
    </location>
    <ligand>
        <name>4-CDP-2-C-methyl-D-erythritol 2-phosphate</name>
        <dbReference type="ChEBI" id="CHEBI:57919"/>
    </ligand>
</feature>
<feature type="binding site" evidence="1">
    <location>
        <position position="275"/>
    </location>
    <ligand>
        <name>a divalent metal cation</name>
        <dbReference type="ChEBI" id="CHEBI:60240"/>
    </ligand>
</feature>
<feature type="binding site" evidence="1">
    <location>
        <begin position="289"/>
        <end position="291"/>
    </location>
    <ligand>
        <name>4-CDP-2-C-methyl-D-erythritol 2-phosphate</name>
        <dbReference type="ChEBI" id="CHEBI:57919"/>
    </ligand>
</feature>
<feature type="binding site" evidence="1">
    <location>
        <begin position="365"/>
        <end position="368"/>
    </location>
    <ligand>
        <name>4-CDP-2-C-methyl-D-erythritol 2-phosphate</name>
        <dbReference type="ChEBI" id="CHEBI:57919"/>
    </ligand>
</feature>
<feature type="binding site" evidence="1">
    <location>
        <position position="372"/>
    </location>
    <ligand>
        <name>4-CDP-2-C-methyl-D-erythritol 2-phosphate</name>
        <dbReference type="ChEBI" id="CHEBI:57919"/>
    </ligand>
</feature>
<feature type="binding site" evidence="1">
    <location>
        <position position="375"/>
    </location>
    <ligand>
        <name>4-CDP-2-C-methyl-D-erythritol 2-phosphate</name>
        <dbReference type="ChEBI" id="CHEBI:57919"/>
    </ligand>
</feature>
<feature type="site" description="Transition state stabilizer" evidence="1">
    <location>
        <position position="19"/>
    </location>
</feature>
<feature type="site" description="Transition state stabilizer" evidence="1">
    <location>
        <position position="26"/>
    </location>
</feature>
<feature type="site" description="Positions MEP for the nucleophilic attack" evidence="1">
    <location>
        <position position="156"/>
    </location>
</feature>
<feature type="site" description="Positions MEP for the nucleophilic attack" evidence="1">
    <location>
        <position position="213"/>
    </location>
</feature>
<feature type="site" description="Transition state stabilizer" evidence="1">
    <location>
        <position position="267"/>
    </location>
</feature>
<feature type="site" description="Transition state stabilizer" evidence="1">
    <location>
        <position position="366"/>
    </location>
</feature>
<proteinExistence type="inferred from homology"/>
<evidence type="ECO:0000255" key="1">
    <source>
        <dbReference type="HAMAP-Rule" id="MF_01520"/>
    </source>
</evidence>